<feature type="chain" id="PRO_0000213039" description="Glutamate/gamma-aminobutyrate antiporter">
    <location>
        <begin position="1"/>
        <end position="503"/>
    </location>
</feature>
<feature type="transmembrane region" description="Helical" evidence="2">
    <location>
        <begin position="35"/>
        <end position="55"/>
    </location>
</feature>
<feature type="transmembrane region" description="Helical" evidence="2">
    <location>
        <begin position="153"/>
        <end position="173"/>
    </location>
</feature>
<feature type="transmembrane region" description="Helical" evidence="2">
    <location>
        <begin position="194"/>
        <end position="214"/>
    </location>
</feature>
<feature type="transmembrane region" description="Helical" evidence="2">
    <location>
        <begin position="232"/>
        <end position="252"/>
    </location>
</feature>
<feature type="transmembrane region" description="Helical" evidence="2">
    <location>
        <begin position="366"/>
        <end position="386"/>
    </location>
</feature>
<feature type="transmembrane region" description="Helical" evidence="2">
    <location>
        <begin position="407"/>
        <end position="427"/>
    </location>
</feature>
<feature type="transmembrane region" description="Helical" evidence="2">
    <location>
        <begin position="440"/>
        <end position="460"/>
    </location>
</feature>
<feature type="binding site" evidence="2">
    <location>
        <begin position="33"/>
        <end position="43"/>
    </location>
    <ligand>
        <name>L-glutamate</name>
        <dbReference type="ChEBI" id="CHEBI:29985"/>
    </ligand>
</feature>
<organism>
    <name type="scientific">Lactococcus lactis subsp. cremoris (strain MG1363)</name>
    <dbReference type="NCBI Taxonomy" id="416870"/>
    <lineage>
        <taxon>Bacteria</taxon>
        <taxon>Bacillati</taxon>
        <taxon>Bacillota</taxon>
        <taxon>Bacilli</taxon>
        <taxon>Lactobacillales</taxon>
        <taxon>Streptococcaceae</taxon>
        <taxon>Lactococcus</taxon>
        <taxon>Lactococcus cremoris subsp. cremoris</taxon>
    </lineage>
</organism>
<reference key="1">
    <citation type="journal article" date="1998" name="Mol. Microbiol.">
        <title>A chloride-inducible acid resistance mechanism in Lactococcus lactis and its regulation.</title>
        <authorList>
            <person name="Sanders J.W."/>
            <person name="Leenhouts K."/>
            <person name="Burghoorn J."/>
            <person name="Brands J.R."/>
            <person name="Venema G."/>
            <person name="Kok J."/>
        </authorList>
    </citation>
    <scope>NUCLEOTIDE SEQUENCE [GENOMIC DNA]</scope>
    <scope>FUNCTION</scope>
    <scope>INDUCTION</scope>
</reference>
<reference key="2">
    <citation type="journal article" date="2007" name="J. Bacteriol.">
        <title>The complete genome sequence of the lactic acid bacterial paradigm Lactococcus lactis subsp. cremoris MG1363.</title>
        <authorList>
            <person name="Wegmann U."/>
            <person name="O'Connell-Motherway M."/>
            <person name="Zomer A."/>
            <person name="Buist G."/>
            <person name="Shearman C."/>
            <person name="Canchaya C."/>
            <person name="Ventura M."/>
            <person name="Goesmann A."/>
            <person name="Gasson M.J."/>
            <person name="Kuipers O.P."/>
            <person name="van Sinderen D."/>
            <person name="Kok J."/>
        </authorList>
    </citation>
    <scope>NUCLEOTIDE SEQUENCE [LARGE SCALE GENOMIC DNA]</scope>
    <source>
        <strain>MG1363</strain>
    </source>
</reference>
<reference key="3">
    <citation type="journal article" date="1998" name="Mol. Gen. Genet.">
        <title>Identification of a sodium chloride-regulated promoter in Lactococcus lactis by single-copy chromosomal fusion with a reporter gene.</title>
        <authorList>
            <person name="Sanders J.W."/>
            <person name="Venema G."/>
            <person name="Kok J."/>
            <person name="Leenhouts K."/>
        </authorList>
    </citation>
    <scope>NUCLEOTIDE SEQUENCE [GENOMIC DNA] OF 1-119</scope>
</reference>
<protein>
    <recommendedName>
        <fullName evidence="4">Glutamate/gamma-aminobutyrate antiporter</fullName>
        <shortName evidence="1">Glu/GABA antiporter</shortName>
    </recommendedName>
</protein>
<proteinExistence type="evidence at transcript level"/>
<dbReference type="EMBL" id="AF005098">
    <property type="protein sequence ID" value="AAC46187.1"/>
    <property type="molecule type" value="Genomic_DNA"/>
</dbReference>
<dbReference type="EMBL" id="AM406671">
    <property type="protein sequence ID" value="CAL97771.1"/>
    <property type="status" value="ALT_INIT"/>
    <property type="molecule type" value="Genomic_DNA"/>
</dbReference>
<dbReference type="RefSeq" id="WP_014735013.1">
    <property type="nucleotide sequence ID" value="NC_009004.1"/>
</dbReference>
<dbReference type="SMR" id="O30417"/>
<dbReference type="STRING" id="416870.llmg_1178"/>
<dbReference type="TCDB" id="2.A.3.7.1">
    <property type="family name" value="the amino acid-polyamine-organocation (apc) family"/>
</dbReference>
<dbReference type="KEGG" id="llm:llmg_1178"/>
<dbReference type="eggNOG" id="COG0531">
    <property type="taxonomic scope" value="Bacteria"/>
</dbReference>
<dbReference type="HOGENOM" id="CLU_020854_4_0_9"/>
<dbReference type="OrthoDB" id="9791588at2"/>
<dbReference type="Proteomes" id="UP000000364">
    <property type="component" value="Chromosome"/>
</dbReference>
<dbReference type="GO" id="GO:0005886">
    <property type="term" value="C:plasma membrane"/>
    <property type="evidence" value="ECO:0007669"/>
    <property type="project" value="UniProtKB-SubCell"/>
</dbReference>
<dbReference type="GO" id="GO:0015297">
    <property type="term" value="F:antiporter activity"/>
    <property type="evidence" value="ECO:0007669"/>
    <property type="project" value="UniProtKB-KW"/>
</dbReference>
<dbReference type="GO" id="GO:0006865">
    <property type="term" value="P:amino acid transport"/>
    <property type="evidence" value="ECO:0007669"/>
    <property type="project" value="UniProtKB-KW"/>
</dbReference>
<dbReference type="Gene3D" id="1.20.1740.10">
    <property type="entry name" value="Amino acid/polyamine transporter I"/>
    <property type="match status" value="1"/>
</dbReference>
<dbReference type="InterPro" id="IPR002293">
    <property type="entry name" value="AA/rel_permease1"/>
</dbReference>
<dbReference type="InterPro" id="IPR050367">
    <property type="entry name" value="APC_superfamily"/>
</dbReference>
<dbReference type="InterPro" id="IPR004759">
    <property type="entry name" value="Glu_antiport"/>
</dbReference>
<dbReference type="NCBIfam" id="TIGR00910">
    <property type="entry name" value="2A0307_GadC"/>
    <property type="match status" value="1"/>
</dbReference>
<dbReference type="PANTHER" id="PTHR42770">
    <property type="entry name" value="AMINO ACID TRANSPORTER-RELATED"/>
    <property type="match status" value="1"/>
</dbReference>
<dbReference type="PANTHER" id="PTHR42770:SF15">
    <property type="entry name" value="GLUTAMATE_GAMMA-AMINOBUTYRATE ANTIPORTER-RELATED"/>
    <property type="match status" value="1"/>
</dbReference>
<dbReference type="Pfam" id="PF13520">
    <property type="entry name" value="AA_permease_2"/>
    <property type="match status" value="1"/>
</dbReference>
<dbReference type="PIRSF" id="PIRSF006060">
    <property type="entry name" value="AA_transporter"/>
    <property type="match status" value="1"/>
</dbReference>
<sequence length="503" mass="55369">MNQKKLSLFGFFALTASMVLTVYEYPTFATSKLHLVFFLLLGGLLWFLPVALCAAEMATVEGWKNGGIFSWVSQTLGERFGFAAIFFQWFQITVGFVTMIYFILGALSYVLNFQALNTDPLIKFIGLLIIFWGLTFSQLGGTQRTAKLVKAGFVVGIVIPSVILFGLAAAYFIGGNPIEIPINSHAFVPDFSQVSTLVVFVSFILAYMGVEASASHINELENPKRNYPLAMILLVILAISLDAIGGFSVAAVIPQKELSLSAGVIQTFQTLILHFNHHLGWLVKVIALMIAFGVMGEVSSWVVGPSRGMFAAAQRGLLPKFLRKTNTHEVPVPLVMIQGIIVTLWGAVLTFGGGGNNLSFLVAISLTVVIYLVGYLLFFIVYFVLIYKKQNLKRTYNVPGKIIGKTIIAGIGFLLSIFALFISFVPPASIAKNETHTYQMILLISFVVTAILPFIIYELHDKKGHDTIEEPTHFKAGDVNPAIYPAARGEHHIIKKEEHILKH</sequence>
<name>GADC_LACLM</name>
<keyword id="KW-0029">Amino-acid transport</keyword>
<keyword id="KW-0050">Antiport</keyword>
<keyword id="KW-1003">Cell membrane</keyword>
<keyword id="KW-0472">Membrane</keyword>
<keyword id="KW-0812">Transmembrane</keyword>
<keyword id="KW-1133">Transmembrane helix</keyword>
<keyword id="KW-0813">Transport</keyword>
<comment type="function">
    <text evidence="1 3">Involved in glutaminase-dependent acid resistance (PubMed:9484886). Exchanges extracellular glutamate (Glu) for intracellular gamma-aminobutyric acid (GABA) under acidic conditions (By similarity).</text>
</comment>
<comment type="catalytic activity">
    <reaction evidence="1">
        <text>4-aminobutanoate(in) + L-glutamate(out) = 4-aminobutanoate(out) + L-glutamate(in)</text>
        <dbReference type="Rhea" id="RHEA:28919"/>
        <dbReference type="ChEBI" id="CHEBI:29985"/>
        <dbReference type="ChEBI" id="CHEBI:59888"/>
    </reaction>
</comment>
<comment type="subcellular location">
    <subcellularLocation>
        <location evidence="1">Cell membrane</location>
        <topology evidence="1">Multi-pass membrane protein</topology>
    </subcellularLocation>
</comment>
<comment type="induction">
    <text evidence="3">Expression is highest at onset of stationary phase in presence of NaCl and glutamate, and at low pH. Chloride-dependent expression is activated by GadR.</text>
</comment>
<comment type="similarity">
    <text evidence="5">Belongs to the amino acid-polyamine-organocation (APC) superfamily. Glutamate:GABA antiporter (GGA) (TC 2.A.3.7) family.</text>
</comment>
<comment type="sequence caution" evidence="5">
    <conflict type="erroneous initiation">
        <sequence resource="EMBL-CDS" id="CAL97771"/>
    </conflict>
</comment>
<evidence type="ECO:0000250" key="1">
    <source>
        <dbReference type="UniProtKB" id="P63235"/>
    </source>
</evidence>
<evidence type="ECO:0000255" key="2"/>
<evidence type="ECO:0000269" key="3">
    <source>
    </source>
</evidence>
<evidence type="ECO:0000303" key="4">
    <source>
    </source>
</evidence>
<evidence type="ECO:0000305" key="5"/>
<accession>O30417</accession>
<accession>A2RKG1</accession>
<gene>
    <name evidence="4" type="primary">gadC</name>
    <name type="ordered locus">llmg_1178</name>
</gene>